<gene>
    <name type="primary">MAGEB1</name>
    <name type="synonym">MAGEL1</name>
    <name type="synonym">MAGEXP</name>
</gene>
<proteinExistence type="evidence at protein level"/>
<name>MAGB1_HUMAN</name>
<dbReference type="EMBL" id="X82539">
    <property type="protein sequence ID" value="CAA57889.1"/>
    <property type="molecule type" value="mRNA"/>
</dbReference>
<dbReference type="EMBL" id="S80936">
    <property type="protein sequence ID" value="AAC97145.1"/>
    <property type="molecule type" value="Genomic_DNA"/>
</dbReference>
<dbReference type="EMBL" id="CR541762">
    <property type="protein sequence ID" value="CAG46562.1"/>
    <property type="molecule type" value="mRNA"/>
</dbReference>
<dbReference type="EMBL" id="AK314977">
    <property type="protein sequence ID" value="BAG37476.1"/>
    <property type="molecule type" value="mRNA"/>
</dbReference>
<dbReference type="EMBL" id="AC005185">
    <property type="protein sequence ID" value="AAD10634.1"/>
    <property type="molecule type" value="Genomic_DNA"/>
</dbReference>
<dbReference type="EMBL" id="CH471074">
    <property type="protein sequence ID" value="EAW99049.1"/>
    <property type="molecule type" value="Genomic_DNA"/>
</dbReference>
<dbReference type="EMBL" id="BC013772">
    <property type="protein sequence ID" value="AAH13772.1"/>
    <property type="molecule type" value="mRNA"/>
</dbReference>
<dbReference type="CCDS" id="CCDS14222.1"/>
<dbReference type="RefSeq" id="NP_002354.2">
    <property type="nucleotide sequence ID" value="NM_002363.4"/>
</dbReference>
<dbReference type="RefSeq" id="NP_796379.1">
    <property type="nucleotide sequence ID" value="NM_177404.3"/>
</dbReference>
<dbReference type="RefSeq" id="NP_803134.1">
    <property type="nucleotide sequence ID" value="NM_177415.3"/>
</dbReference>
<dbReference type="PDB" id="6R7T">
    <property type="method" value="X-ray"/>
    <property type="resolution" value="2.68 A"/>
    <property type="chains" value="B=99-347"/>
</dbReference>
<dbReference type="PDBsum" id="6R7T"/>
<dbReference type="SMR" id="P43366"/>
<dbReference type="BioGRID" id="110286">
    <property type="interactions" value="10"/>
</dbReference>
<dbReference type="FunCoup" id="P43366">
    <property type="interactions" value="168"/>
</dbReference>
<dbReference type="IntAct" id="P43366">
    <property type="interactions" value="2"/>
</dbReference>
<dbReference type="STRING" id="9606.ENSP00000368264"/>
<dbReference type="GlyGen" id="P43366">
    <property type="glycosylation" value="2 sites, 1 O-linked glycan (2 sites)"/>
</dbReference>
<dbReference type="iPTMnet" id="P43366"/>
<dbReference type="PhosphoSitePlus" id="P43366"/>
<dbReference type="BioMuta" id="MAGEB1"/>
<dbReference type="DMDM" id="17380136"/>
<dbReference type="MassIVE" id="P43366"/>
<dbReference type="PaxDb" id="9606-ENSP00000368264"/>
<dbReference type="PeptideAtlas" id="P43366"/>
<dbReference type="ProteomicsDB" id="55629"/>
<dbReference type="Pumba" id="P43366"/>
<dbReference type="ABCD" id="P43366">
    <property type="antibodies" value="1 sequenced antibody"/>
</dbReference>
<dbReference type="Antibodypedia" id="380">
    <property type="antibodies" value="323 antibodies from 27 providers"/>
</dbReference>
<dbReference type="DNASU" id="4112"/>
<dbReference type="Ensembl" id="ENST00000378981.8">
    <property type="protein sequence ID" value="ENSP00000368264.3"/>
    <property type="gene ID" value="ENSG00000214107.9"/>
</dbReference>
<dbReference type="Ensembl" id="ENST00000397548.4">
    <property type="protein sequence ID" value="ENSP00000380681.2"/>
    <property type="gene ID" value="ENSG00000214107.9"/>
</dbReference>
<dbReference type="Ensembl" id="ENST00000397550.6">
    <property type="protein sequence ID" value="ENSP00000380683.1"/>
    <property type="gene ID" value="ENSG00000214107.9"/>
</dbReference>
<dbReference type="GeneID" id="4112"/>
<dbReference type="KEGG" id="hsa:4112"/>
<dbReference type="MANE-Select" id="ENST00000397548.4">
    <property type="protein sequence ID" value="ENSP00000380681.2"/>
    <property type="RefSeq nucleotide sequence ID" value="NM_177404.3"/>
    <property type="RefSeq protein sequence ID" value="NP_796379.1"/>
</dbReference>
<dbReference type="UCSC" id="uc004dcc.4">
    <property type="organism name" value="human"/>
</dbReference>
<dbReference type="AGR" id="HGNC:6808"/>
<dbReference type="CTD" id="4112"/>
<dbReference type="DisGeNET" id="4112"/>
<dbReference type="GeneCards" id="MAGEB1"/>
<dbReference type="HGNC" id="HGNC:6808">
    <property type="gene designation" value="MAGEB1"/>
</dbReference>
<dbReference type="HPA" id="ENSG00000214107">
    <property type="expression patterns" value="Tissue enriched (testis)"/>
</dbReference>
<dbReference type="MIM" id="300097">
    <property type="type" value="gene"/>
</dbReference>
<dbReference type="neXtProt" id="NX_P43366"/>
<dbReference type="OpenTargets" id="ENSG00000214107"/>
<dbReference type="PharmGKB" id="PA30554"/>
<dbReference type="VEuPathDB" id="HostDB:ENSG00000214107"/>
<dbReference type="eggNOG" id="KOG4562">
    <property type="taxonomic scope" value="Eukaryota"/>
</dbReference>
<dbReference type="GeneTree" id="ENSGT00940000166106"/>
<dbReference type="HOGENOM" id="CLU_039582_1_0_1"/>
<dbReference type="InParanoid" id="P43366"/>
<dbReference type="OMA" id="KDPIAWE"/>
<dbReference type="OrthoDB" id="205198at2759"/>
<dbReference type="PAN-GO" id="P43366">
    <property type="GO annotations" value="2 GO annotations based on evolutionary models"/>
</dbReference>
<dbReference type="PhylomeDB" id="P43366"/>
<dbReference type="TreeFam" id="TF328505"/>
<dbReference type="PathwayCommons" id="P43366"/>
<dbReference type="SignaLink" id="P43366"/>
<dbReference type="BioGRID-ORCS" id="4112">
    <property type="hits" value="14 hits in 772 CRISPR screens"/>
</dbReference>
<dbReference type="GenomeRNAi" id="4112"/>
<dbReference type="Pharos" id="P43366">
    <property type="development level" value="Tbio"/>
</dbReference>
<dbReference type="PRO" id="PR:P43366"/>
<dbReference type="Proteomes" id="UP000005640">
    <property type="component" value="Chromosome X"/>
</dbReference>
<dbReference type="RNAct" id="P43366">
    <property type="molecule type" value="protein"/>
</dbReference>
<dbReference type="Bgee" id="ENSG00000214107">
    <property type="expression patterns" value="Expressed in male germ line stem cell (sensu Vertebrata) in testis and 19 other cell types or tissues"/>
</dbReference>
<dbReference type="GO" id="GO:0005634">
    <property type="term" value="C:nucleus"/>
    <property type="evidence" value="ECO:0000318"/>
    <property type="project" value="GO_Central"/>
</dbReference>
<dbReference type="GO" id="GO:0000122">
    <property type="term" value="P:negative regulation of transcription by RNA polymerase II"/>
    <property type="evidence" value="ECO:0000318"/>
    <property type="project" value="GO_Central"/>
</dbReference>
<dbReference type="FunFam" id="1.10.10.1200:FF:000007">
    <property type="entry name" value="Melanoma-associated antigen C2"/>
    <property type="match status" value="1"/>
</dbReference>
<dbReference type="FunFam" id="1.10.10.1210:FF:000001">
    <property type="entry name" value="melanoma-associated antigen D1"/>
    <property type="match status" value="1"/>
</dbReference>
<dbReference type="Gene3D" id="1.10.10.1200">
    <property type="entry name" value="MAGE homology domain, winged helix WH1 motif"/>
    <property type="match status" value="1"/>
</dbReference>
<dbReference type="Gene3D" id="1.10.10.1210">
    <property type="entry name" value="MAGE homology domain, winged helix WH2 motif"/>
    <property type="match status" value="1"/>
</dbReference>
<dbReference type="InterPro" id="IPR037445">
    <property type="entry name" value="MAGE"/>
</dbReference>
<dbReference type="InterPro" id="IPR021072">
    <property type="entry name" value="MAGE_N"/>
</dbReference>
<dbReference type="InterPro" id="IPR041898">
    <property type="entry name" value="MAGE_WH1"/>
</dbReference>
<dbReference type="InterPro" id="IPR041899">
    <property type="entry name" value="MAGE_WH2"/>
</dbReference>
<dbReference type="InterPro" id="IPR002190">
    <property type="entry name" value="MHD_dom"/>
</dbReference>
<dbReference type="PANTHER" id="PTHR11736:SF164">
    <property type="entry name" value="MELANOMA-ASSOCIATED ANTIGEN B1"/>
    <property type="match status" value="1"/>
</dbReference>
<dbReference type="PANTHER" id="PTHR11736">
    <property type="entry name" value="MELANOMA-ASSOCIATED ANTIGEN MAGE ANTIGEN"/>
    <property type="match status" value="1"/>
</dbReference>
<dbReference type="Pfam" id="PF01454">
    <property type="entry name" value="MAGE"/>
    <property type="match status" value="1"/>
</dbReference>
<dbReference type="Pfam" id="PF12440">
    <property type="entry name" value="MAGE_N"/>
    <property type="match status" value="1"/>
</dbReference>
<dbReference type="SMART" id="SM01373">
    <property type="entry name" value="MAGE"/>
    <property type="match status" value="1"/>
</dbReference>
<dbReference type="SMART" id="SM01392">
    <property type="entry name" value="MAGE_N"/>
    <property type="match status" value="1"/>
</dbReference>
<dbReference type="PROSITE" id="PS50838">
    <property type="entry name" value="MAGE"/>
    <property type="match status" value="1"/>
</dbReference>
<accession>P43366</accession>
<accession>B2RC79</accession>
<accession>O00601</accession>
<accession>O75862</accession>
<accession>Q6FHJ0</accession>
<accession>Q96CW8</accession>
<evidence type="ECO:0000255" key="1">
    <source>
        <dbReference type="PROSITE-ProRule" id="PRU00127"/>
    </source>
</evidence>
<evidence type="ECO:0000256" key="2">
    <source>
        <dbReference type="SAM" id="MobiDB-lite"/>
    </source>
</evidence>
<evidence type="ECO:0000305" key="3"/>
<evidence type="ECO:0007829" key="4">
    <source>
        <dbReference type="PDB" id="6R7T"/>
    </source>
</evidence>
<protein>
    <recommendedName>
        <fullName>Melanoma-associated antigen B1</fullName>
    </recommendedName>
    <alternativeName>
        <fullName>Cancer/testis antigen 3.1</fullName>
        <shortName>CT3.1</shortName>
    </alternativeName>
    <alternativeName>
        <fullName>DSS-AHC critical interval MAGE superfamily 10</fullName>
        <shortName>DAM10</shortName>
    </alternativeName>
    <alternativeName>
        <fullName>MAGE-B1 antigen</fullName>
    </alternativeName>
    <alternativeName>
        <fullName>MAGE-XP antigen</fullName>
    </alternativeName>
</protein>
<comment type="tissue specificity">
    <text>Expressed only in testis.</text>
</comment>
<keyword id="KW-0002">3D-structure</keyword>
<keyword id="KW-1267">Proteomics identification</keyword>
<keyword id="KW-1185">Reference proteome</keyword>
<keyword id="KW-0825">Tumor antigen</keyword>
<reference key="1">
    <citation type="journal article" date="1995" name="Proc. Natl. Acad. Sci. U.S.A.">
        <title>Isolation and characterization of a MAGE gene family in the Xp21.3 region.</title>
        <authorList>
            <person name="Muscatelli F."/>
            <person name="Walker A.P."/>
            <person name="De Plaen E."/>
            <person name="Stafford A.N."/>
            <person name="Monaco A.P."/>
        </authorList>
    </citation>
    <scope>NUCLEOTIDE SEQUENCE [MRNA]</scope>
    <source>
        <tissue>Testis</tissue>
    </source>
</reference>
<reference key="2">
    <citation type="journal article" date="1995" name="Mamm. Genome">
        <title>A family of rapidly evolving genes from the sex reversal critical region in Xp21.</title>
        <authorList>
            <person name="Dabovic B."/>
            <person name="Zanaria E."/>
            <person name="Bardoni B."/>
            <person name="Lisa A."/>
            <person name="Bordignon C."/>
            <person name="Russo V."/>
            <person name="Matessi C."/>
            <person name="Traversari C."/>
            <person name="Camerino G."/>
        </authorList>
    </citation>
    <scope>NUCLEOTIDE SEQUENCE [GENOMIC DNA]</scope>
    <source>
        <tissue>Testis</tissue>
    </source>
</reference>
<reference key="3">
    <citation type="submission" date="2004-06" db="EMBL/GenBank/DDBJ databases">
        <title>Cloning of human full open reading frames in Gateway(TM) system entry vector (pDONR201).</title>
        <authorList>
            <person name="Halleck A."/>
            <person name="Ebert L."/>
            <person name="Mkoundinya M."/>
            <person name="Schick M."/>
            <person name="Eisenstein S."/>
            <person name="Neubert P."/>
            <person name="Kstrang K."/>
            <person name="Schatten R."/>
            <person name="Shen B."/>
            <person name="Henze S."/>
            <person name="Mar W."/>
            <person name="Korn B."/>
            <person name="Zuo D."/>
            <person name="Hu Y."/>
            <person name="LaBaer J."/>
        </authorList>
    </citation>
    <scope>NUCLEOTIDE SEQUENCE [LARGE SCALE MRNA]</scope>
</reference>
<reference key="4">
    <citation type="journal article" date="2004" name="Nat. Genet.">
        <title>Complete sequencing and characterization of 21,243 full-length human cDNAs.</title>
        <authorList>
            <person name="Ota T."/>
            <person name="Suzuki Y."/>
            <person name="Nishikawa T."/>
            <person name="Otsuki T."/>
            <person name="Sugiyama T."/>
            <person name="Irie R."/>
            <person name="Wakamatsu A."/>
            <person name="Hayashi K."/>
            <person name="Sato H."/>
            <person name="Nagai K."/>
            <person name="Kimura K."/>
            <person name="Makita H."/>
            <person name="Sekine M."/>
            <person name="Obayashi M."/>
            <person name="Nishi T."/>
            <person name="Shibahara T."/>
            <person name="Tanaka T."/>
            <person name="Ishii S."/>
            <person name="Yamamoto J."/>
            <person name="Saito K."/>
            <person name="Kawai Y."/>
            <person name="Isono Y."/>
            <person name="Nakamura Y."/>
            <person name="Nagahari K."/>
            <person name="Murakami K."/>
            <person name="Yasuda T."/>
            <person name="Iwayanagi T."/>
            <person name="Wagatsuma M."/>
            <person name="Shiratori A."/>
            <person name="Sudo H."/>
            <person name="Hosoiri T."/>
            <person name="Kaku Y."/>
            <person name="Kodaira H."/>
            <person name="Kondo H."/>
            <person name="Sugawara M."/>
            <person name="Takahashi M."/>
            <person name="Kanda K."/>
            <person name="Yokoi T."/>
            <person name="Furuya T."/>
            <person name="Kikkawa E."/>
            <person name="Omura Y."/>
            <person name="Abe K."/>
            <person name="Kamihara K."/>
            <person name="Katsuta N."/>
            <person name="Sato K."/>
            <person name="Tanikawa M."/>
            <person name="Yamazaki M."/>
            <person name="Ninomiya K."/>
            <person name="Ishibashi T."/>
            <person name="Yamashita H."/>
            <person name="Murakawa K."/>
            <person name="Fujimori K."/>
            <person name="Tanai H."/>
            <person name="Kimata M."/>
            <person name="Watanabe M."/>
            <person name="Hiraoka S."/>
            <person name="Chiba Y."/>
            <person name="Ishida S."/>
            <person name="Ono Y."/>
            <person name="Takiguchi S."/>
            <person name="Watanabe S."/>
            <person name="Yosida M."/>
            <person name="Hotuta T."/>
            <person name="Kusano J."/>
            <person name="Kanehori K."/>
            <person name="Takahashi-Fujii A."/>
            <person name="Hara H."/>
            <person name="Tanase T.-O."/>
            <person name="Nomura Y."/>
            <person name="Togiya S."/>
            <person name="Komai F."/>
            <person name="Hara R."/>
            <person name="Takeuchi K."/>
            <person name="Arita M."/>
            <person name="Imose N."/>
            <person name="Musashino K."/>
            <person name="Yuuki H."/>
            <person name="Oshima A."/>
            <person name="Sasaki N."/>
            <person name="Aotsuka S."/>
            <person name="Yoshikawa Y."/>
            <person name="Matsunawa H."/>
            <person name="Ichihara T."/>
            <person name="Shiohata N."/>
            <person name="Sano S."/>
            <person name="Moriya S."/>
            <person name="Momiyama H."/>
            <person name="Satoh N."/>
            <person name="Takami S."/>
            <person name="Terashima Y."/>
            <person name="Suzuki O."/>
            <person name="Nakagawa S."/>
            <person name="Senoh A."/>
            <person name="Mizoguchi H."/>
            <person name="Goto Y."/>
            <person name="Shimizu F."/>
            <person name="Wakebe H."/>
            <person name="Hishigaki H."/>
            <person name="Watanabe T."/>
            <person name="Sugiyama A."/>
            <person name="Takemoto M."/>
            <person name="Kawakami B."/>
            <person name="Yamazaki M."/>
            <person name="Watanabe K."/>
            <person name="Kumagai A."/>
            <person name="Itakura S."/>
            <person name="Fukuzumi Y."/>
            <person name="Fujimori Y."/>
            <person name="Komiyama M."/>
            <person name="Tashiro H."/>
            <person name="Tanigami A."/>
            <person name="Fujiwara T."/>
            <person name="Ono T."/>
            <person name="Yamada K."/>
            <person name="Fujii Y."/>
            <person name="Ozaki K."/>
            <person name="Hirao M."/>
            <person name="Ohmori Y."/>
            <person name="Kawabata A."/>
            <person name="Hikiji T."/>
            <person name="Kobatake N."/>
            <person name="Inagaki H."/>
            <person name="Ikema Y."/>
            <person name="Okamoto S."/>
            <person name="Okitani R."/>
            <person name="Kawakami T."/>
            <person name="Noguchi S."/>
            <person name="Itoh T."/>
            <person name="Shigeta K."/>
            <person name="Senba T."/>
            <person name="Matsumura K."/>
            <person name="Nakajima Y."/>
            <person name="Mizuno T."/>
            <person name="Morinaga M."/>
            <person name="Sasaki M."/>
            <person name="Togashi T."/>
            <person name="Oyama M."/>
            <person name="Hata H."/>
            <person name="Watanabe M."/>
            <person name="Komatsu T."/>
            <person name="Mizushima-Sugano J."/>
            <person name="Satoh T."/>
            <person name="Shirai Y."/>
            <person name="Takahashi Y."/>
            <person name="Nakagawa K."/>
            <person name="Okumura K."/>
            <person name="Nagase T."/>
            <person name="Nomura N."/>
            <person name="Kikuchi H."/>
            <person name="Masuho Y."/>
            <person name="Yamashita R."/>
            <person name="Nakai K."/>
            <person name="Yada T."/>
            <person name="Nakamura Y."/>
            <person name="Ohara O."/>
            <person name="Isogai T."/>
            <person name="Sugano S."/>
        </authorList>
    </citation>
    <scope>NUCLEOTIDE SEQUENCE [LARGE SCALE MRNA]</scope>
    <source>
        <tissue>Testis</tissue>
    </source>
</reference>
<reference key="5">
    <citation type="journal article" date="2005" name="Nature">
        <title>The DNA sequence of the human X chromosome.</title>
        <authorList>
            <person name="Ross M.T."/>
            <person name="Grafham D.V."/>
            <person name="Coffey A.J."/>
            <person name="Scherer S."/>
            <person name="McLay K."/>
            <person name="Muzny D."/>
            <person name="Platzer M."/>
            <person name="Howell G.R."/>
            <person name="Burrows C."/>
            <person name="Bird C.P."/>
            <person name="Frankish A."/>
            <person name="Lovell F.L."/>
            <person name="Howe K.L."/>
            <person name="Ashurst J.L."/>
            <person name="Fulton R.S."/>
            <person name="Sudbrak R."/>
            <person name="Wen G."/>
            <person name="Jones M.C."/>
            <person name="Hurles M.E."/>
            <person name="Andrews T.D."/>
            <person name="Scott C.E."/>
            <person name="Searle S."/>
            <person name="Ramser J."/>
            <person name="Whittaker A."/>
            <person name="Deadman R."/>
            <person name="Carter N.P."/>
            <person name="Hunt S.E."/>
            <person name="Chen R."/>
            <person name="Cree A."/>
            <person name="Gunaratne P."/>
            <person name="Havlak P."/>
            <person name="Hodgson A."/>
            <person name="Metzker M.L."/>
            <person name="Richards S."/>
            <person name="Scott G."/>
            <person name="Steffen D."/>
            <person name="Sodergren E."/>
            <person name="Wheeler D.A."/>
            <person name="Worley K.C."/>
            <person name="Ainscough R."/>
            <person name="Ambrose K.D."/>
            <person name="Ansari-Lari M.A."/>
            <person name="Aradhya S."/>
            <person name="Ashwell R.I."/>
            <person name="Babbage A.K."/>
            <person name="Bagguley C.L."/>
            <person name="Ballabio A."/>
            <person name="Banerjee R."/>
            <person name="Barker G.E."/>
            <person name="Barlow K.F."/>
            <person name="Barrett I.P."/>
            <person name="Bates K.N."/>
            <person name="Beare D.M."/>
            <person name="Beasley H."/>
            <person name="Beasley O."/>
            <person name="Beck A."/>
            <person name="Bethel G."/>
            <person name="Blechschmidt K."/>
            <person name="Brady N."/>
            <person name="Bray-Allen S."/>
            <person name="Bridgeman A.M."/>
            <person name="Brown A.J."/>
            <person name="Brown M.J."/>
            <person name="Bonnin D."/>
            <person name="Bruford E.A."/>
            <person name="Buhay C."/>
            <person name="Burch P."/>
            <person name="Burford D."/>
            <person name="Burgess J."/>
            <person name="Burrill W."/>
            <person name="Burton J."/>
            <person name="Bye J.M."/>
            <person name="Carder C."/>
            <person name="Carrel L."/>
            <person name="Chako J."/>
            <person name="Chapman J.C."/>
            <person name="Chavez D."/>
            <person name="Chen E."/>
            <person name="Chen G."/>
            <person name="Chen Y."/>
            <person name="Chen Z."/>
            <person name="Chinault C."/>
            <person name="Ciccodicola A."/>
            <person name="Clark S.Y."/>
            <person name="Clarke G."/>
            <person name="Clee C.M."/>
            <person name="Clegg S."/>
            <person name="Clerc-Blankenburg K."/>
            <person name="Clifford K."/>
            <person name="Cobley V."/>
            <person name="Cole C.G."/>
            <person name="Conquer J.S."/>
            <person name="Corby N."/>
            <person name="Connor R.E."/>
            <person name="David R."/>
            <person name="Davies J."/>
            <person name="Davis C."/>
            <person name="Davis J."/>
            <person name="Delgado O."/>
            <person name="Deshazo D."/>
            <person name="Dhami P."/>
            <person name="Ding Y."/>
            <person name="Dinh H."/>
            <person name="Dodsworth S."/>
            <person name="Draper H."/>
            <person name="Dugan-Rocha S."/>
            <person name="Dunham A."/>
            <person name="Dunn M."/>
            <person name="Durbin K.J."/>
            <person name="Dutta I."/>
            <person name="Eades T."/>
            <person name="Ellwood M."/>
            <person name="Emery-Cohen A."/>
            <person name="Errington H."/>
            <person name="Evans K.L."/>
            <person name="Faulkner L."/>
            <person name="Francis F."/>
            <person name="Frankland J."/>
            <person name="Fraser A.E."/>
            <person name="Galgoczy P."/>
            <person name="Gilbert J."/>
            <person name="Gill R."/>
            <person name="Gloeckner G."/>
            <person name="Gregory S.G."/>
            <person name="Gribble S."/>
            <person name="Griffiths C."/>
            <person name="Grocock R."/>
            <person name="Gu Y."/>
            <person name="Gwilliam R."/>
            <person name="Hamilton C."/>
            <person name="Hart E.A."/>
            <person name="Hawes A."/>
            <person name="Heath P.D."/>
            <person name="Heitmann K."/>
            <person name="Hennig S."/>
            <person name="Hernandez J."/>
            <person name="Hinzmann B."/>
            <person name="Ho S."/>
            <person name="Hoffs M."/>
            <person name="Howden P.J."/>
            <person name="Huckle E.J."/>
            <person name="Hume J."/>
            <person name="Hunt P.J."/>
            <person name="Hunt A.R."/>
            <person name="Isherwood J."/>
            <person name="Jacob L."/>
            <person name="Johnson D."/>
            <person name="Jones S."/>
            <person name="de Jong P.J."/>
            <person name="Joseph S.S."/>
            <person name="Keenan S."/>
            <person name="Kelly S."/>
            <person name="Kershaw J.K."/>
            <person name="Khan Z."/>
            <person name="Kioschis P."/>
            <person name="Klages S."/>
            <person name="Knights A.J."/>
            <person name="Kosiura A."/>
            <person name="Kovar-Smith C."/>
            <person name="Laird G.K."/>
            <person name="Langford C."/>
            <person name="Lawlor S."/>
            <person name="Leversha M."/>
            <person name="Lewis L."/>
            <person name="Liu W."/>
            <person name="Lloyd C."/>
            <person name="Lloyd D.M."/>
            <person name="Loulseged H."/>
            <person name="Loveland J.E."/>
            <person name="Lovell J.D."/>
            <person name="Lozado R."/>
            <person name="Lu J."/>
            <person name="Lyne R."/>
            <person name="Ma J."/>
            <person name="Maheshwari M."/>
            <person name="Matthews L.H."/>
            <person name="McDowall J."/>
            <person name="McLaren S."/>
            <person name="McMurray A."/>
            <person name="Meidl P."/>
            <person name="Meitinger T."/>
            <person name="Milne S."/>
            <person name="Miner G."/>
            <person name="Mistry S.L."/>
            <person name="Morgan M."/>
            <person name="Morris S."/>
            <person name="Mueller I."/>
            <person name="Mullikin J.C."/>
            <person name="Nguyen N."/>
            <person name="Nordsiek G."/>
            <person name="Nyakatura G."/>
            <person name="O'dell C.N."/>
            <person name="Okwuonu G."/>
            <person name="Palmer S."/>
            <person name="Pandian R."/>
            <person name="Parker D."/>
            <person name="Parrish J."/>
            <person name="Pasternak S."/>
            <person name="Patel D."/>
            <person name="Pearce A.V."/>
            <person name="Pearson D.M."/>
            <person name="Pelan S.E."/>
            <person name="Perez L."/>
            <person name="Porter K.M."/>
            <person name="Ramsey Y."/>
            <person name="Reichwald K."/>
            <person name="Rhodes S."/>
            <person name="Ridler K.A."/>
            <person name="Schlessinger D."/>
            <person name="Schueler M.G."/>
            <person name="Sehra H.K."/>
            <person name="Shaw-Smith C."/>
            <person name="Shen H."/>
            <person name="Sheridan E.M."/>
            <person name="Shownkeen R."/>
            <person name="Skuce C.D."/>
            <person name="Smith M.L."/>
            <person name="Sotheran E.C."/>
            <person name="Steingruber H.E."/>
            <person name="Steward C.A."/>
            <person name="Storey R."/>
            <person name="Swann R.M."/>
            <person name="Swarbreck D."/>
            <person name="Tabor P.E."/>
            <person name="Taudien S."/>
            <person name="Taylor T."/>
            <person name="Teague B."/>
            <person name="Thomas K."/>
            <person name="Thorpe A."/>
            <person name="Timms K."/>
            <person name="Tracey A."/>
            <person name="Trevanion S."/>
            <person name="Tromans A.C."/>
            <person name="d'Urso M."/>
            <person name="Verduzco D."/>
            <person name="Villasana D."/>
            <person name="Waldron L."/>
            <person name="Wall M."/>
            <person name="Wang Q."/>
            <person name="Warren J."/>
            <person name="Warry G.L."/>
            <person name="Wei X."/>
            <person name="West A."/>
            <person name="Whitehead S.L."/>
            <person name="Whiteley M.N."/>
            <person name="Wilkinson J.E."/>
            <person name="Willey D.L."/>
            <person name="Williams G."/>
            <person name="Williams L."/>
            <person name="Williamson A."/>
            <person name="Williamson H."/>
            <person name="Wilming L."/>
            <person name="Woodmansey R.L."/>
            <person name="Wray P.W."/>
            <person name="Yen J."/>
            <person name="Zhang J."/>
            <person name="Zhou J."/>
            <person name="Zoghbi H."/>
            <person name="Zorilla S."/>
            <person name="Buck D."/>
            <person name="Reinhardt R."/>
            <person name="Poustka A."/>
            <person name="Rosenthal A."/>
            <person name="Lehrach H."/>
            <person name="Meindl A."/>
            <person name="Minx P.J."/>
            <person name="Hillier L.W."/>
            <person name="Willard H.F."/>
            <person name="Wilson R.K."/>
            <person name="Waterston R.H."/>
            <person name="Rice C.M."/>
            <person name="Vaudin M."/>
            <person name="Coulson A."/>
            <person name="Nelson D.L."/>
            <person name="Weinstock G."/>
            <person name="Sulston J.E."/>
            <person name="Durbin R.M."/>
            <person name="Hubbard T."/>
            <person name="Gibbs R.A."/>
            <person name="Beck S."/>
            <person name="Rogers J."/>
            <person name="Bentley D.R."/>
        </authorList>
    </citation>
    <scope>NUCLEOTIDE SEQUENCE [LARGE SCALE GENOMIC DNA]</scope>
</reference>
<reference key="6">
    <citation type="submission" date="2005-07" db="EMBL/GenBank/DDBJ databases">
        <authorList>
            <person name="Mural R.J."/>
            <person name="Istrail S."/>
            <person name="Sutton G.G."/>
            <person name="Florea L."/>
            <person name="Halpern A.L."/>
            <person name="Mobarry C.M."/>
            <person name="Lippert R."/>
            <person name="Walenz B."/>
            <person name="Shatkay H."/>
            <person name="Dew I."/>
            <person name="Miller J.R."/>
            <person name="Flanigan M.J."/>
            <person name="Edwards N.J."/>
            <person name="Bolanos R."/>
            <person name="Fasulo D."/>
            <person name="Halldorsson B.V."/>
            <person name="Hannenhalli S."/>
            <person name="Turner R."/>
            <person name="Yooseph S."/>
            <person name="Lu F."/>
            <person name="Nusskern D.R."/>
            <person name="Shue B.C."/>
            <person name="Zheng X.H."/>
            <person name="Zhong F."/>
            <person name="Delcher A.L."/>
            <person name="Huson D.H."/>
            <person name="Kravitz S.A."/>
            <person name="Mouchard L."/>
            <person name="Reinert K."/>
            <person name="Remington K.A."/>
            <person name="Clark A.G."/>
            <person name="Waterman M.S."/>
            <person name="Eichler E.E."/>
            <person name="Adams M.D."/>
            <person name="Hunkapiller M.W."/>
            <person name="Myers E.W."/>
            <person name="Venter J.C."/>
        </authorList>
    </citation>
    <scope>NUCLEOTIDE SEQUENCE [LARGE SCALE GENOMIC DNA]</scope>
</reference>
<reference key="7">
    <citation type="journal article" date="2004" name="Genome Res.">
        <title>The status, quality, and expansion of the NIH full-length cDNA project: the Mammalian Gene Collection (MGC).</title>
        <authorList>
            <consortium name="The MGC Project Team"/>
        </authorList>
    </citation>
    <scope>NUCLEOTIDE SEQUENCE [LARGE SCALE MRNA]</scope>
    <source>
        <tissue>Skin</tissue>
    </source>
</reference>
<reference key="8">
    <citation type="journal article" date="2011" name="BMC Syst. Biol.">
        <title>Initial characterization of the human central proteome.</title>
        <authorList>
            <person name="Burkard T.R."/>
            <person name="Planyavsky M."/>
            <person name="Kaupe I."/>
            <person name="Breitwieser F.P."/>
            <person name="Buerckstuemmer T."/>
            <person name="Bennett K.L."/>
            <person name="Superti-Furga G."/>
            <person name="Colinge J."/>
        </authorList>
    </citation>
    <scope>IDENTIFICATION BY MASS SPECTROMETRY [LARGE SCALE ANALYSIS]</scope>
</reference>
<organism>
    <name type="scientific">Homo sapiens</name>
    <name type="common">Human</name>
    <dbReference type="NCBI Taxonomy" id="9606"/>
    <lineage>
        <taxon>Eukaryota</taxon>
        <taxon>Metazoa</taxon>
        <taxon>Chordata</taxon>
        <taxon>Craniata</taxon>
        <taxon>Vertebrata</taxon>
        <taxon>Euteleostomi</taxon>
        <taxon>Mammalia</taxon>
        <taxon>Eutheria</taxon>
        <taxon>Euarchontoglires</taxon>
        <taxon>Primates</taxon>
        <taxon>Haplorrhini</taxon>
        <taxon>Catarrhini</taxon>
        <taxon>Hominidae</taxon>
        <taxon>Homo</taxon>
    </lineage>
</organism>
<feature type="chain" id="PRO_0000156712" description="Melanoma-associated antigen B1">
    <location>
        <begin position="1"/>
        <end position="347"/>
    </location>
</feature>
<feature type="domain" description="MAGE" evidence="1">
    <location>
        <begin position="108"/>
        <end position="307"/>
    </location>
</feature>
<feature type="region of interest" description="Disordered" evidence="2">
    <location>
        <begin position="1"/>
        <end position="104"/>
    </location>
</feature>
<feature type="region of interest" description="Disordered" evidence="2">
    <location>
        <begin position="315"/>
        <end position="347"/>
    </location>
</feature>
<feature type="compositionally biased region" description="Basic residues" evidence="2">
    <location>
        <begin position="1"/>
        <end position="17"/>
    </location>
</feature>
<feature type="compositionally biased region" description="Polar residues" evidence="2">
    <location>
        <begin position="39"/>
        <end position="53"/>
    </location>
</feature>
<feature type="compositionally biased region" description="Polar residues" evidence="2">
    <location>
        <begin position="89"/>
        <end position="102"/>
    </location>
</feature>
<feature type="compositionally biased region" description="Low complexity" evidence="2">
    <location>
        <begin position="328"/>
        <end position="347"/>
    </location>
</feature>
<feature type="sequence variant" id="VAR_053499" description="In dbSNP:rs7062640.">
    <original>R</original>
    <variation>C</variation>
    <location>
        <position position="267"/>
    </location>
</feature>
<feature type="sequence conflict" description="In Ref. 3; CAG46562." evidence="3" ref="3">
    <original>Q</original>
    <variation>E</variation>
    <location>
        <position position="5"/>
    </location>
</feature>
<feature type="sequence conflict" description="In Ref. 7; AAH13772." evidence="3" ref="7">
    <original>QG</original>
    <variation>HY</variation>
    <location>
        <begin position="23"/>
        <end position="24"/>
    </location>
</feature>
<feature type="sequence conflict" description="In Ref. 1; CAA57889." evidence="3" ref="1">
    <original>A</original>
    <variation>R</variation>
    <location>
        <position position="28"/>
    </location>
</feature>
<feature type="sequence conflict" description="In Ref. 7; AAH13772." evidence="3" ref="7">
    <original>DH</original>
    <variation>EY</variation>
    <location>
        <begin position="144"/>
        <end position="145"/>
    </location>
</feature>
<feature type="sequence conflict" description="In Ref. 1; CAA57889." evidence="3" ref="1">
    <original>G</original>
    <variation>S</variation>
    <location>
        <position position="172"/>
    </location>
</feature>
<feature type="sequence conflict" description="In Ref. 2; AAC97145." evidence="3" ref="2">
    <original>T</original>
    <variation>I</variation>
    <location>
        <position position="327"/>
    </location>
</feature>
<feature type="helix" evidence="4">
    <location>
        <begin position="107"/>
        <end position="124"/>
    </location>
</feature>
<feature type="helix" evidence="4">
    <location>
        <begin position="131"/>
        <end position="136"/>
    </location>
</feature>
<feature type="helix" evidence="4">
    <location>
        <begin position="147"/>
        <end position="160"/>
    </location>
</feature>
<feature type="helix" evidence="4">
    <location>
        <begin position="196"/>
        <end position="200"/>
    </location>
</feature>
<feature type="helix" evidence="4">
    <location>
        <begin position="201"/>
        <end position="210"/>
    </location>
</feature>
<feature type="turn" evidence="4">
    <location>
        <begin position="211"/>
        <end position="213"/>
    </location>
</feature>
<feature type="helix" evidence="4">
    <location>
        <begin position="217"/>
        <end position="226"/>
    </location>
</feature>
<feature type="turn" evidence="4">
    <location>
        <begin position="236"/>
        <end position="238"/>
    </location>
</feature>
<feature type="helix" evidence="4">
    <location>
        <begin position="241"/>
        <end position="246"/>
    </location>
</feature>
<feature type="helix" evidence="4">
    <location>
        <begin position="248"/>
        <end position="251"/>
    </location>
</feature>
<feature type="strand" evidence="4">
    <location>
        <begin position="254"/>
        <end position="258"/>
    </location>
</feature>
<feature type="strand" evidence="4">
    <location>
        <begin position="269"/>
        <end position="272"/>
    </location>
</feature>
<feature type="helix" evidence="4">
    <location>
        <begin position="274"/>
        <end position="279"/>
    </location>
</feature>
<feature type="helix" evidence="4">
    <location>
        <begin position="282"/>
        <end position="291"/>
    </location>
</feature>
<feature type="strand" evidence="4">
    <location>
        <begin position="292"/>
        <end position="295"/>
    </location>
</feature>
<feature type="helix" evidence="4">
    <location>
        <begin position="297"/>
        <end position="299"/>
    </location>
</feature>
<feature type="helix" evidence="4">
    <location>
        <begin position="301"/>
        <end position="315"/>
    </location>
</feature>
<sequence>MPRGQKSKLRAREKRRKAREETQGLKVAHATAAEKEECPSSSPVLGDTPTSSPAAGIPQKPQGAPPTTTAAAAVSCTESDEGAKCQGEENASFSQATTSTESSVKDPVAWEAGMLMHFILRKYKMREPIMKADMLKVVDEKYKDHFTEILNGASRRLELVFGLDLKEDNPSGHTYTLVSKLNLTNDGNLSNDWDFPRNGLLMPLLGVIFLKGNSATEEEIWKFMNVLGAYDGEEHLIYGEPRKFITQDLVQEKYLKYEQVPNSDPPRYQFLWGPRAYAETTKMKVLEFLAKMNGATPRDFPSHYEEALRDEEERAQVRSSVRARRRTTATTFRARSRAPFSRSSHPM</sequence>